<reference key="1">
    <citation type="journal article" date="2005" name="Science">
        <title>Genome streamlining in a cosmopolitan oceanic bacterium.</title>
        <authorList>
            <person name="Giovannoni S.J."/>
            <person name="Tripp H.J."/>
            <person name="Givan S."/>
            <person name="Podar M."/>
            <person name="Vergin K.L."/>
            <person name="Baptista D."/>
            <person name="Bibbs L."/>
            <person name="Eads J."/>
            <person name="Richardson T.H."/>
            <person name="Noordewier M."/>
            <person name="Rappe M.S."/>
            <person name="Short J.M."/>
            <person name="Carrington J.C."/>
            <person name="Mathur E.J."/>
        </authorList>
    </citation>
    <scope>NUCLEOTIDE SEQUENCE [LARGE SCALE GENOMIC DNA]</scope>
    <source>
        <strain>HTCC1062</strain>
    </source>
</reference>
<accession>Q4FM83</accession>
<proteinExistence type="inferred from homology"/>
<organism>
    <name type="scientific">Pelagibacter ubique (strain HTCC1062)</name>
    <dbReference type="NCBI Taxonomy" id="335992"/>
    <lineage>
        <taxon>Bacteria</taxon>
        <taxon>Pseudomonadati</taxon>
        <taxon>Pseudomonadota</taxon>
        <taxon>Alphaproteobacteria</taxon>
        <taxon>Candidatus Pelagibacterales</taxon>
        <taxon>Candidatus Pelagibacteraceae</taxon>
        <taxon>Candidatus Pelagibacter</taxon>
    </lineage>
</organism>
<protein>
    <recommendedName>
        <fullName evidence="1">NADH-quinone oxidoreductase subunit I</fullName>
        <ecNumber evidence="1">7.1.1.-</ecNumber>
    </recommendedName>
    <alternativeName>
        <fullName evidence="1">NADH dehydrogenase I subunit I</fullName>
    </alternativeName>
    <alternativeName>
        <fullName evidence="1">NDH-1 subunit I</fullName>
    </alternativeName>
</protein>
<name>NUOI_PELUB</name>
<comment type="function">
    <text evidence="1">NDH-1 shuttles electrons from NADH, via FMN and iron-sulfur (Fe-S) centers, to quinones in the respiratory chain. The immediate electron acceptor for the enzyme in this species is believed to be ubiquinone. Couples the redox reaction to proton translocation (for every two electrons transferred, four hydrogen ions are translocated across the cytoplasmic membrane), and thus conserves the redox energy in a proton gradient.</text>
</comment>
<comment type="catalytic activity">
    <reaction evidence="1">
        <text>a quinone + NADH + 5 H(+)(in) = a quinol + NAD(+) + 4 H(+)(out)</text>
        <dbReference type="Rhea" id="RHEA:57888"/>
        <dbReference type="ChEBI" id="CHEBI:15378"/>
        <dbReference type="ChEBI" id="CHEBI:24646"/>
        <dbReference type="ChEBI" id="CHEBI:57540"/>
        <dbReference type="ChEBI" id="CHEBI:57945"/>
        <dbReference type="ChEBI" id="CHEBI:132124"/>
    </reaction>
</comment>
<comment type="cofactor">
    <cofactor evidence="1">
        <name>[4Fe-4S] cluster</name>
        <dbReference type="ChEBI" id="CHEBI:49883"/>
    </cofactor>
    <text evidence="1">Binds 2 [4Fe-4S] clusters per subunit.</text>
</comment>
<comment type="subunit">
    <text evidence="1">NDH-1 is composed of 14 different subunits. Subunits NuoA, H, J, K, L, M, N constitute the membrane sector of the complex.</text>
</comment>
<comment type="subcellular location">
    <subcellularLocation>
        <location evidence="1">Cell inner membrane</location>
        <topology evidence="1">Peripheral membrane protein</topology>
    </subcellularLocation>
</comment>
<comment type="similarity">
    <text evidence="1">Belongs to the complex I 23 kDa subunit family.</text>
</comment>
<sequence length="161" mass="18500">MKISRIFKTIFLLDFLGGLNIAIKEIFKSKKTINYPFEKGKISPRFRGEHALRRYPNGEERCIACKLCEAVCPAQAITIESSERADGSRKTTRYDIDMMKCIYCGLCEESCPVDAIVQGPNFEFSTETREELYYNKEKLLDNGDRWENVLAANIKADNSHR</sequence>
<feature type="chain" id="PRO_0000250924" description="NADH-quinone oxidoreductase subunit I">
    <location>
        <begin position="1"/>
        <end position="161"/>
    </location>
</feature>
<feature type="domain" description="4Fe-4S ferredoxin-type 1" evidence="1">
    <location>
        <begin position="52"/>
        <end position="82"/>
    </location>
</feature>
<feature type="domain" description="4Fe-4S ferredoxin-type 2" evidence="1">
    <location>
        <begin position="92"/>
        <end position="121"/>
    </location>
</feature>
<feature type="binding site" evidence="1">
    <location>
        <position position="62"/>
    </location>
    <ligand>
        <name>[4Fe-4S] cluster</name>
        <dbReference type="ChEBI" id="CHEBI:49883"/>
        <label>1</label>
    </ligand>
</feature>
<feature type="binding site" evidence="1">
    <location>
        <position position="65"/>
    </location>
    <ligand>
        <name>[4Fe-4S] cluster</name>
        <dbReference type="ChEBI" id="CHEBI:49883"/>
        <label>1</label>
    </ligand>
</feature>
<feature type="binding site" evidence="1">
    <location>
        <position position="68"/>
    </location>
    <ligand>
        <name>[4Fe-4S] cluster</name>
        <dbReference type="ChEBI" id="CHEBI:49883"/>
        <label>1</label>
    </ligand>
</feature>
<feature type="binding site" evidence="1">
    <location>
        <position position="72"/>
    </location>
    <ligand>
        <name>[4Fe-4S] cluster</name>
        <dbReference type="ChEBI" id="CHEBI:49883"/>
        <label>2</label>
    </ligand>
</feature>
<feature type="binding site" evidence="1">
    <location>
        <position position="101"/>
    </location>
    <ligand>
        <name>[4Fe-4S] cluster</name>
        <dbReference type="ChEBI" id="CHEBI:49883"/>
        <label>2</label>
    </ligand>
</feature>
<feature type="binding site" evidence="1">
    <location>
        <position position="104"/>
    </location>
    <ligand>
        <name>[4Fe-4S] cluster</name>
        <dbReference type="ChEBI" id="CHEBI:49883"/>
        <label>2</label>
    </ligand>
</feature>
<feature type="binding site" evidence="1">
    <location>
        <position position="107"/>
    </location>
    <ligand>
        <name>[4Fe-4S] cluster</name>
        <dbReference type="ChEBI" id="CHEBI:49883"/>
        <label>2</label>
    </ligand>
</feature>
<feature type="binding site" evidence="1">
    <location>
        <position position="111"/>
    </location>
    <ligand>
        <name>[4Fe-4S] cluster</name>
        <dbReference type="ChEBI" id="CHEBI:49883"/>
        <label>1</label>
    </ligand>
</feature>
<dbReference type="EC" id="7.1.1.-" evidence="1"/>
<dbReference type="EMBL" id="CP000084">
    <property type="protein sequence ID" value="AAZ21706.1"/>
    <property type="molecule type" value="Genomic_DNA"/>
</dbReference>
<dbReference type="RefSeq" id="WP_006997028.1">
    <property type="nucleotide sequence ID" value="NC_007205.1"/>
</dbReference>
<dbReference type="SMR" id="Q4FM83"/>
<dbReference type="STRING" id="335992.SAR11_0891"/>
<dbReference type="GeneID" id="66295386"/>
<dbReference type="KEGG" id="pub:SAR11_0891"/>
<dbReference type="eggNOG" id="COG1143">
    <property type="taxonomic scope" value="Bacteria"/>
</dbReference>
<dbReference type="HOGENOM" id="CLU_067218_5_1_5"/>
<dbReference type="OrthoDB" id="9808559at2"/>
<dbReference type="Proteomes" id="UP000002528">
    <property type="component" value="Chromosome"/>
</dbReference>
<dbReference type="GO" id="GO:0005886">
    <property type="term" value="C:plasma membrane"/>
    <property type="evidence" value="ECO:0007669"/>
    <property type="project" value="UniProtKB-SubCell"/>
</dbReference>
<dbReference type="GO" id="GO:0051539">
    <property type="term" value="F:4 iron, 4 sulfur cluster binding"/>
    <property type="evidence" value="ECO:0007669"/>
    <property type="project" value="UniProtKB-KW"/>
</dbReference>
<dbReference type="GO" id="GO:0005506">
    <property type="term" value="F:iron ion binding"/>
    <property type="evidence" value="ECO:0007669"/>
    <property type="project" value="UniProtKB-UniRule"/>
</dbReference>
<dbReference type="GO" id="GO:0050136">
    <property type="term" value="F:NADH:ubiquinone reductase (non-electrogenic) activity"/>
    <property type="evidence" value="ECO:0007669"/>
    <property type="project" value="UniProtKB-UniRule"/>
</dbReference>
<dbReference type="GO" id="GO:0048038">
    <property type="term" value="F:quinone binding"/>
    <property type="evidence" value="ECO:0007669"/>
    <property type="project" value="UniProtKB-KW"/>
</dbReference>
<dbReference type="GO" id="GO:0009060">
    <property type="term" value="P:aerobic respiration"/>
    <property type="evidence" value="ECO:0007669"/>
    <property type="project" value="TreeGrafter"/>
</dbReference>
<dbReference type="FunFam" id="3.30.70.3270:FF:000001">
    <property type="entry name" value="NADH-quinone oxidoreductase subunit I 1"/>
    <property type="match status" value="1"/>
</dbReference>
<dbReference type="Gene3D" id="3.30.70.3270">
    <property type="match status" value="1"/>
</dbReference>
<dbReference type="HAMAP" id="MF_01351">
    <property type="entry name" value="NDH1_NuoI"/>
    <property type="match status" value="1"/>
</dbReference>
<dbReference type="InterPro" id="IPR017896">
    <property type="entry name" value="4Fe4S_Fe-S-bd"/>
</dbReference>
<dbReference type="InterPro" id="IPR017900">
    <property type="entry name" value="4Fe4S_Fe_S_CS"/>
</dbReference>
<dbReference type="InterPro" id="IPR010226">
    <property type="entry name" value="NADH_quinone_OxRdtase_chainI"/>
</dbReference>
<dbReference type="NCBIfam" id="TIGR01971">
    <property type="entry name" value="NuoI"/>
    <property type="match status" value="1"/>
</dbReference>
<dbReference type="NCBIfam" id="NF004538">
    <property type="entry name" value="PRK05888.1-4"/>
    <property type="match status" value="1"/>
</dbReference>
<dbReference type="NCBIfam" id="NF004539">
    <property type="entry name" value="PRK05888.1-5"/>
    <property type="match status" value="1"/>
</dbReference>
<dbReference type="PANTHER" id="PTHR10849:SF20">
    <property type="entry name" value="NADH DEHYDROGENASE [UBIQUINONE] IRON-SULFUR PROTEIN 8, MITOCHONDRIAL"/>
    <property type="match status" value="1"/>
</dbReference>
<dbReference type="PANTHER" id="PTHR10849">
    <property type="entry name" value="NADH DEHYDROGENASE UBIQUINONE IRON-SULFUR PROTEIN 8, MITOCHONDRIAL"/>
    <property type="match status" value="1"/>
</dbReference>
<dbReference type="Pfam" id="PF12838">
    <property type="entry name" value="Fer4_7"/>
    <property type="match status" value="1"/>
</dbReference>
<dbReference type="SUPFAM" id="SSF54862">
    <property type="entry name" value="4Fe-4S ferredoxins"/>
    <property type="match status" value="1"/>
</dbReference>
<dbReference type="PROSITE" id="PS00198">
    <property type="entry name" value="4FE4S_FER_1"/>
    <property type="match status" value="2"/>
</dbReference>
<dbReference type="PROSITE" id="PS51379">
    <property type="entry name" value="4FE4S_FER_2"/>
    <property type="match status" value="2"/>
</dbReference>
<keyword id="KW-0004">4Fe-4S</keyword>
<keyword id="KW-0997">Cell inner membrane</keyword>
<keyword id="KW-1003">Cell membrane</keyword>
<keyword id="KW-0408">Iron</keyword>
<keyword id="KW-0411">Iron-sulfur</keyword>
<keyword id="KW-0472">Membrane</keyword>
<keyword id="KW-0479">Metal-binding</keyword>
<keyword id="KW-0520">NAD</keyword>
<keyword id="KW-0874">Quinone</keyword>
<keyword id="KW-1185">Reference proteome</keyword>
<keyword id="KW-0677">Repeat</keyword>
<keyword id="KW-1278">Translocase</keyword>
<keyword id="KW-0830">Ubiquinone</keyword>
<gene>
    <name evidence="1" type="primary">nuoI</name>
    <name type="ordered locus">SAR11_0891</name>
</gene>
<evidence type="ECO:0000255" key="1">
    <source>
        <dbReference type="HAMAP-Rule" id="MF_01351"/>
    </source>
</evidence>